<organism>
    <name type="scientific">Dictyostelium discoideum</name>
    <name type="common">Social amoeba</name>
    <dbReference type="NCBI Taxonomy" id="44689"/>
    <lineage>
        <taxon>Eukaryota</taxon>
        <taxon>Amoebozoa</taxon>
        <taxon>Evosea</taxon>
        <taxon>Eumycetozoa</taxon>
        <taxon>Dictyostelia</taxon>
        <taxon>Dictyosteliales</taxon>
        <taxon>Dictyosteliaceae</taxon>
        <taxon>Dictyostelium</taxon>
    </lineage>
</organism>
<feature type="chain" id="PRO_0000393275" description="Nuclear pore complex protein nup85">
    <location>
        <begin position="1"/>
        <end position="890"/>
    </location>
</feature>
<feature type="repeat" description="1">
    <location>
        <begin position="16"/>
        <end position="17"/>
    </location>
</feature>
<feature type="repeat" description="2">
    <location>
        <begin position="32"/>
        <end position="33"/>
    </location>
</feature>
<feature type="repeat" description="3">
    <location>
        <begin position="49"/>
        <end position="50"/>
    </location>
</feature>
<feature type="repeat" description="4">
    <location>
        <begin position="61"/>
        <end position="62"/>
    </location>
</feature>
<feature type="repeat" description="5">
    <location>
        <begin position="618"/>
        <end position="619"/>
    </location>
</feature>
<feature type="region of interest" description="5 X 2 AA repeats of F-G">
    <location>
        <begin position="16"/>
        <end position="619"/>
    </location>
</feature>
<feature type="region of interest" description="Disordered" evidence="4">
    <location>
        <begin position="59"/>
        <end position="86"/>
    </location>
</feature>
<feature type="coiled-coil region" evidence="3">
    <location>
        <begin position="719"/>
        <end position="752"/>
    </location>
</feature>
<feature type="compositionally biased region" description="Low complexity" evidence="4">
    <location>
        <begin position="59"/>
        <end position="84"/>
    </location>
</feature>
<evidence type="ECO:0000250" key="1"/>
<evidence type="ECO:0000250" key="2">
    <source>
        <dbReference type="UniProtKB" id="P46673"/>
    </source>
</evidence>
<evidence type="ECO:0000255" key="3"/>
<evidence type="ECO:0000256" key="4">
    <source>
        <dbReference type="SAM" id="MobiDB-lite"/>
    </source>
</evidence>
<evidence type="ECO:0000305" key="5"/>
<comment type="function">
    <text evidence="2">Component of the nuclear pore complex, a complex required for the trafficking across the nuclear membrane.</text>
</comment>
<comment type="subunit">
    <text evidence="2">Component of the nuclear pore complex (NPC). NPC constitutes the exclusive means of nucleocytoplasmic transport. NPCs allow the passive diffusion of ions and small molecules and the active, nuclear transport receptor-mediated bidirectional transport of macromolecules such as proteins, RNAs, ribonucleoparticles (RNPs), and ribosomal subunits across the nuclear envelope. Due to its 8-fold rotational symmetry, all subunits are present with 8 copies or multiples thereof.</text>
</comment>
<comment type="subcellular location">
    <subcellularLocation>
        <location evidence="2">Nucleus</location>
        <location evidence="2">Nuclear pore complex</location>
    </subcellularLocation>
    <subcellularLocation>
        <location evidence="1">Nucleus membrane</location>
    </subcellularLocation>
</comment>
<comment type="domain">
    <text>Contains FG repeats.</text>
</comment>
<comment type="similarity">
    <text evidence="5">Belongs to the nucleoporin Nup85 family.</text>
</comment>
<sequence>MFSLNPQSNGNSNNLFGNVTLGNFSNNSNNLFGGSSTTSTNTNNSNNLFGGSSTTNSNNLFGSGGSSTTNNNNFNSNFNNNNIKNENKIKNGKKFYNFRWSPTGEILLYNTLNNFDNHNFDQKNGGSDTIRYEMNTTLSTIKKFYNDLYTNFETMQRIAGLSNQVIPDDRVREISHHSRTYLSVILAAINQMSKSQKTGSYIDDEDSCMNCDPLDNDLIKIQTPRVLEYFKQYPNKTLIFFCGSIDSIYPYLCSKLSMETKSKCILIARESNVPNSKRLDLIRTISNQGELKILNKDEYSNRYQIANENYGELDDVLTLEIDDTYLAYEREIDNLICMSTMWRVANLFYFSVSSSSNSVSPTQLLDCIELERKELLNSIEQQGTQDPMDSEYYNQIARLLVCGCIDQVIQQLNILSRAPRSASQIKSTSRKSPINLLIDILSSIPLKKKSINGGGGAPLYPNEHLIQWNKWHQETQKILSQYIESGSSSTNQVDENLLPIVKILLGDQQTIMSTCNSFLQLVVSNILFVEYTTSTTQLRQLFTQCYQTIQAPTTVDKIFLSFATKDLDITLKKIFKHSPAWLAVHLSDLLYHHPYVMRKLPNSESQLTNIREYLLSDFGQSLASDSSLLSIGCNYLKYVKNGGLEMIDQFISRQPIHFEKNAIKMLDKWATSVETKNSIYKMLSLQDFKRKRYAASLNWLMLANDNSHITLLSNYLLENQLNSEFLNDLQSLLEKNDEIDCNINNNNNNNNNNNSNNRISGNNNNNMIIDENKFEITNNSELIFLIRYRELISLWKERSFKEYSSSLCLMFKDRVIPKRFWLRLLIDCVPLLESLKNLYFTYQDTLLLQSCLEEIIQSHLFDQYSFNISNQDIQILRSALARNLAKSIIS</sequence>
<gene>
    <name type="primary">nup85</name>
    <name type="ORF">DDB_G0285415</name>
</gene>
<name>NUP85_DICDI</name>
<proteinExistence type="evidence at protein level"/>
<keyword id="KW-0002">3D-structure</keyword>
<keyword id="KW-0175">Coiled coil</keyword>
<keyword id="KW-0472">Membrane</keyword>
<keyword id="KW-0509">mRNA transport</keyword>
<keyword id="KW-0906">Nuclear pore complex</keyword>
<keyword id="KW-0539">Nucleus</keyword>
<keyword id="KW-0653">Protein transport</keyword>
<keyword id="KW-1185">Reference proteome</keyword>
<keyword id="KW-0677">Repeat</keyword>
<keyword id="KW-0811">Translocation</keyword>
<keyword id="KW-0813">Transport</keyword>
<accession>Q54NA0</accession>
<reference key="1">
    <citation type="journal article" date="2005" name="Nature">
        <title>The genome of the social amoeba Dictyostelium discoideum.</title>
        <authorList>
            <person name="Eichinger L."/>
            <person name="Pachebat J.A."/>
            <person name="Gloeckner G."/>
            <person name="Rajandream M.A."/>
            <person name="Sucgang R."/>
            <person name="Berriman M."/>
            <person name="Song J."/>
            <person name="Olsen R."/>
            <person name="Szafranski K."/>
            <person name="Xu Q."/>
            <person name="Tunggal B."/>
            <person name="Kummerfeld S."/>
            <person name="Madera M."/>
            <person name="Konfortov B.A."/>
            <person name="Rivero F."/>
            <person name="Bankier A.T."/>
            <person name="Lehmann R."/>
            <person name="Hamlin N."/>
            <person name="Davies R."/>
            <person name="Gaudet P."/>
            <person name="Fey P."/>
            <person name="Pilcher K."/>
            <person name="Chen G."/>
            <person name="Saunders D."/>
            <person name="Sodergren E.J."/>
            <person name="Davis P."/>
            <person name="Kerhornou A."/>
            <person name="Nie X."/>
            <person name="Hall N."/>
            <person name="Anjard C."/>
            <person name="Hemphill L."/>
            <person name="Bason N."/>
            <person name="Farbrother P."/>
            <person name="Desany B."/>
            <person name="Just E."/>
            <person name="Morio T."/>
            <person name="Rost R."/>
            <person name="Churcher C.M."/>
            <person name="Cooper J."/>
            <person name="Haydock S."/>
            <person name="van Driessche N."/>
            <person name="Cronin A."/>
            <person name="Goodhead I."/>
            <person name="Muzny D.M."/>
            <person name="Mourier T."/>
            <person name="Pain A."/>
            <person name="Lu M."/>
            <person name="Harper D."/>
            <person name="Lindsay R."/>
            <person name="Hauser H."/>
            <person name="James K.D."/>
            <person name="Quiles M."/>
            <person name="Madan Babu M."/>
            <person name="Saito T."/>
            <person name="Buchrieser C."/>
            <person name="Wardroper A."/>
            <person name="Felder M."/>
            <person name="Thangavelu M."/>
            <person name="Johnson D."/>
            <person name="Knights A."/>
            <person name="Loulseged H."/>
            <person name="Mungall K.L."/>
            <person name="Oliver K."/>
            <person name="Price C."/>
            <person name="Quail M.A."/>
            <person name="Urushihara H."/>
            <person name="Hernandez J."/>
            <person name="Rabbinowitsch E."/>
            <person name="Steffen D."/>
            <person name="Sanders M."/>
            <person name="Ma J."/>
            <person name="Kohara Y."/>
            <person name="Sharp S."/>
            <person name="Simmonds M.N."/>
            <person name="Spiegler S."/>
            <person name="Tivey A."/>
            <person name="Sugano S."/>
            <person name="White B."/>
            <person name="Walker D."/>
            <person name="Woodward J.R."/>
            <person name="Winckler T."/>
            <person name="Tanaka Y."/>
            <person name="Shaulsky G."/>
            <person name="Schleicher M."/>
            <person name="Weinstock G.M."/>
            <person name="Rosenthal A."/>
            <person name="Cox E.C."/>
            <person name="Chisholm R.L."/>
            <person name="Gibbs R.A."/>
            <person name="Loomis W.F."/>
            <person name="Platzer M."/>
            <person name="Kay R.R."/>
            <person name="Williams J.G."/>
            <person name="Dear P.H."/>
            <person name="Noegel A.A."/>
            <person name="Barrell B.G."/>
            <person name="Kuspa A."/>
        </authorList>
    </citation>
    <scope>NUCLEOTIDE SEQUENCE [LARGE SCALE GENOMIC DNA]</scope>
    <source>
        <strain>AX4</strain>
    </source>
</reference>
<protein>
    <recommendedName>
        <fullName>Nuclear pore complex protein nup85</fullName>
    </recommendedName>
    <alternativeName>
        <fullName>Nucleoporin nup85</fullName>
    </alternativeName>
</protein>
<dbReference type="EMBL" id="AAFI02000079">
    <property type="protein sequence ID" value="EAL64782.1"/>
    <property type="molecule type" value="Genomic_DNA"/>
</dbReference>
<dbReference type="RefSeq" id="XP_638280.1">
    <property type="nucleotide sequence ID" value="XM_633188.1"/>
</dbReference>
<dbReference type="PDB" id="9HCJ">
    <property type="method" value="EM"/>
    <property type="resolution" value="30.00 A"/>
    <property type="chains" value="P0/P1/P2/P3=1-890"/>
</dbReference>
<dbReference type="PDBsum" id="9HCJ"/>
<dbReference type="SMR" id="Q54NA0"/>
<dbReference type="FunCoup" id="Q54NA0">
    <property type="interactions" value="445"/>
</dbReference>
<dbReference type="STRING" id="44689.Q54NA0"/>
<dbReference type="PaxDb" id="44689-DDB0235247"/>
<dbReference type="EnsemblProtists" id="EAL64782">
    <property type="protein sequence ID" value="EAL64782"/>
    <property type="gene ID" value="DDB_G0285415"/>
</dbReference>
<dbReference type="GeneID" id="8625088"/>
<dbReference type="KEGG" id="ddi:DDB_G0285415"/>
<dbReference type="dictyBase" id="DDB_G0285415">
    <property type="gene designation" value="nup85"/>
</dbReference>
<dbReference type="VEuPathDB" id="AmoebaDB:DDB_G0285415"/>
<dbReference type="eggNOG" id="KOG2271">
    <property type="taxonomic scope" value="Eukaryota"/>
</dbReference>
<dbReference type="HOGENOM" id="CLU_324513_0_0_1"/>
<dbReference type="InParanoid" id="Q54NA0"/>
<dbReference type="OMA" id="CILIARE"/>
<dbReference type="PhylomeDB" id="Q54NA0"/>
<dbReference type="PRO" id="PR:Q54NA0"/>
<dbReference type="Proteomes" id="UP000002195">
    <property type="component" value="Chromosome 4"/>
</dbReference>
<dbReference type="GO" id="GO:0031965">
    <property type="term" value="C:nuclear membrane"/>
    <property type="evidence" value="ECO:0007669"/>
    <property type="project" value="UniProtKB-SubCell"/>
</dbReference>
<dbReference type="GO" id="GO:0031080">
    <property type="term" value="C:nuclear pore outer ring"/>
    <property type="evidence" value="ECO:0000314"/>
    <property type="project" value="dictyBase"/>
</dbReference>
<dbReference type="GO" id="GO:0017056">
    <property type="term" value="F:structural constituent of nuclear pore"/>
    <property type="evidence" value="ECO:0000314"/>
    <property type="project" value="dictyBase"/>
</dbReference>
<dbReference type="GO" id="GO:0006406">
    <property type="term" value="P:mRNA export from nucleus"/>
    <property type="evidence" value="ECO:0000318"/>
    <property type="project" value="GO_Central"/>
</dbReference>
<dbReference type="GO" id="GO:0045893">
    <property type="term" value="P:positive regulation of DNA-templated transcription"/>
    <property type="evidence" value="ECO:0000318"/>
    <property type="project" value="GO_Central"/>
</dbReference>
<dbReference type="GO" id="GO:0006606">
    <property type="term" value="P:protein import into nucleus"/>
    <property type="evidence" value="ECO:0000318"/>
    <property type="project" value="GO_Central"/>
</dbReference>
<dbReference type="InterPro" id="IPR011502">
    <property type="entry name" value="Nucleoporin_Nup85"/>
</dbReference>
<dbReference type="PANTHER" id="PTHR13373">
    <property type="entry name" value="FROUNT PROTEIN-RELATED"/>
    <property type="match status" value="1"/>
</dbReference>
<dbReference type="PANTHER" id="PTHR13373:SF21">
    <property type="entry name" value="NUCLEAR PORE COMPLEX PROTEIN NUP85"/>
    <property type="match status" value="1"/>
</dbReference>
<dbReference type="Pfam" id="PF07575">
    <property type="entry name" value="Nucleopor_Nup85"/>
    <property type="match status" value="1"/>
</dbReference>